<gene>
    <name evidence="1" type="primary">nhaB</name>
    <name type="ordered locus">Shew_2175</name>
</gene>
<proteinExistence type="inferred from homology"/>
<accession>A3QEZ3</accession>
<keyword id="KW-0050">Antiport</keyword>
<keyword id="KW-0997">Cell inner membrane</keyword>
<keyword id="KW-1003">Cell membrane</keyword>
<keyword id="KW-0406">Ion transport</keyword>
<keyword id="KW-0472">Membrane</keyword>
<keyword id="KW-1185">Reference proteome</keyword>
<keyword id="KW-0915">Sodium</keyword>
<keyword id="KW-0739">Sodium transport</keyword>
<keyword id="KW-0812">Transmembrane</keyword>
<keyword id="KW-1133">Transmembrane helix</keyword>
<keyword id="KW-0813">Transport</keyword>
<protein>
    <recommendedName>
        <fullName evidence="1">Na(+)/H(+) antiporter NhaB</fullName>
    </recommendedName>
    <alternativeName>
        <fullName evidence="1">Sodium/proton antiporter NhaB</fullName>
    </alternativeName>
</protein>
<dbReference type="EMBL" id="CP000606">
    <property type="protein sequence ID" value="ABO24041.1"/>
    <property type="molecule type" value="Genomic_DNA"/>
</dbReference>
<dbReference type="RefSeq" id="WP_011865973.1">
    <property type="nucleotide sequence ID" value="NC_009092.1"/>
</dbReference>
<dbReference type="SMR" id="A3QEZ3"/>
<dbReference type="STRING" id="323850.Shew_2175"/>
<dbReference type="KEGG" id="slo:Shew_2175"/>
<dbReference type="eggNOG" id="COG3067">
    <property type="taxonomic scope" value="Bacteria"/>
</dbReference>
<dbReference type="HOGENOM" id="CLU_041110_0_0_6"/>
<dbReference type="OrthoDB" id="5288732at2"/>
<dbReference type="Proteomes" id="UP000001558">
    <property type="component" value="Chromosome"/>
</dbReference>
<dbReference type="GO" id="GO:0005886">
    <property type="term" value="C:plasma membrane"/>
    <property type="evidence" value="ECO:0007669"/>
    <property type="project" value="UniProtKB-SubCell"/>
</dbReference>
<dbReference type="GO" id="GO:0015385">
    <property type="term" value="F:sodium:proton antiporter activity"/>
    <property type="evidence" value="ECO:0007669"/>
    <property type="project" value="InterPro"/>
</dbReference>
<dbReference type="HAMAP" id="MF_01599">
    <property type="entry name" value="NhaB"/>
    <property type="match status" value="1"/>
</dbReference>
<dbReference type="InterPro" id="IPR004671">
    <property type="entry name" value="Na+/H+_antiporter_NhaB"/>
</dbReference>
<dbReference type="NCBIfam" id="TIGR00774">
    <property type="entry name" value="NhaB"/>
    <property type="match status" value="1"/>
</dbReference>
<dbReference type="NCBIfam" id="NF007093">
    <property type="entry name" value="PRK09547.1"/>
    <property type="match status" value="1"/>
</dbReference>
<dbReference type="PANTHER" id="PTHR43302:SF1">
    <property type="entry name" value="NA(+)_H(+) ANTIPORTER NHAB"/>
    <property type="match status" value="1"/>
</dbReference>
<dbReference type="PANTHER" id="PTHR43302">
    <property type="entry name" value="TRANSPORTER ARSB-RELATED"/>
    <property type="match status" value="1"/>
</dbReference>
<dbReference type="Pfam" id="PF06450">
    <property type="entry name" value="NhaB"/>
    <property type="match status" value="1"/>
</dbReference>
<reference key="1">
    <citation type="submission" date="2007-03" db="EMBL/GenBank/DDBJ databases">
        <title>Complete sequence of Shewanella loihica PV-4.</title>
        <authorList>
            <consortium name="US DOE Joint Genome Institute"/>
            <person name="Copeland A."/>
            <person name="Lucas S."/>
            <person name="Lapidus A."/>
            <person name="Barry K."/>
            <person name="Detter J.C."/>
            <person name="Glavina del Rio T."/>
            <person name="Hammon N."/>
            <person name="Israni S."/>
            <person name="Dalin E."/>
            <person name="Tice H."/>
            <person name="Pitluck S."/>
            <person name="Chain P."/>
            <person name="Malfatti S."/>
            <person name="Shin M."/>
            <person name="Vergez L."/>
            <person name="Schmutz J."/>
            <person name="Larimer F."/>
            <person name="Land M."/>
            <person name="Hauser L."/>
            <person name="Kyrpides N."/>
            <person name="Mikhailova N."/>
            <person name="Romine M.F."/>
            <person name="Serres G."/>
            <person name="Fredrickson J."/>
            <person name="Tiedje J."/>
            <person name="Richardson P."/>
        </authorList>
    </citation>
    <scope>NUCLEOTIDE SEQUENCE [LARGE SCALE GENOMIC DNA]</scope>
    <source>
        <strain>ATCC BAA-1088 / PV-4</strain>
    </source>
</reference>
<name>NHAB_SHELP</name>
<comment type="function">
    <text evidence="1">Na(+)/H(+) antiporter that extrudes sodium in exchange for external protons.</text>
</comment>
<comment type="catalytic activity">
    <reaction evidence="1">
        <text>2 Na(+)(in) + 3 H(+)(out) = 2 Na(+)(out) + 3 H(+)(in)</text>
        <dbReference type="Rhea" id="RHEA:29247"/>
        <dbReference type="ChEBI" id="CHEBI:15378"/>
        <dbReference type="ChEBI" id="CHEBI:29101"/>
    </reaction>
    <physiologicalReaction direction="left-to-right" evidence="1">
        <dbReference type="Rhea" id="RHEA:29248"/>
    </physiologicalReaction>
</comment>
<comment type="subcellular location">
    <subcellularLocation>
        <location evidence="1">Cell inner membrane</location>
        <topology evidence="1">Multi-pass membrane protein</topology>
    </subcellularLocation>
</comment>
<comment type="similarity">
    <text evidence="1">Belongs to the NhaB Na(+)/H(+) (TC 2.A.34) antiporter family.</text>
</comment>
<sequence>MPVTMSQAFIDNFLGNSPKWFKIAILSFLVINPIVFYLNPFVAGWLLVVEFIFTLAMALKCYPLQPGGLLAIEAVIIGMTSPSQVLHEIEANLEVLLLLIFMVAGIYFMKQLLLFVFTKMITKIRSKVVVSLMFCIASAFLSAFLDALTVIAVIIAVAVGFYSIYHKVASGKSFTDDHDHTSDSHGEGHSLCEDELEAFRGFLRNLLMHAGIGTALGGVCTMVGEPQNLIIAAQANWQFGEFALRMGPVTVPVFISGIATCFLVEKFKWFGYGQQLPEAVHKILSDYASYEDAHRTKHDKIKLVIQAFVGVWLIVGLAFHLASVGLIGLSVIILTTAFNGVTNEHALGKAFEEALPFTALLAVFFAIVGVIIDQQLFAPVIQWALSYEGNTQLVIFYIANGLLSMVSDNVFVGTVYINEVKAALLDGQITRDQFDLLAVAINTGTNLPSVATPNGQAAFLFLLTSAIAPLIRLSYGRMVWMALPYTIVLSIVGILAIETGFLGEMTQYFYDSHMLIHHSVAEAAKGAVTGH</sequence>
<organism>
    <name type="scientific">Shewanella loihica (strain ATCC BAA-1088 / PV-4)</name>
    <dbReference type="NCBI Taxonomy" id="323850"/>
    <lineage>
        <taxon>Bacteria</taxon>
        <taxon>Pseudomonadati</taxon>
        <taxon>Pseudomonadota</taxon>
        <taxon>Gammaproteobacteria</taxon>
        <taxon>Alteromonadales</taxon>
        <taxon>Shewanellaceae</taxon>
        <taxon>Shewanella</taxon>
    </lineage>
</organism>
<feature type="chain" id="PRO_0000333130" description="Na(+)/H(+) antiporter NhaB">
    <location>
        <begin position="1"/>
        <end position="531"/>
    </location>
</feature>
<feature type="transmembrane region" description="Helical" evidence="1">
    <location>
        <begin position="23"/>
        <end position="45"/>
    </location>
</feature>
<feature type="transmembrane region" description="Helical" evidence="1">
    <location>
        <begin position="66"/>
        <end position="86"/>
    </location>
</feature>
<feature type="transmembrane region" description="Helical" evidence="1">
    <location>
        <begin position="97"/>
        <end position="117"/>
    </location>
</feature>
<feature type="transmembrane region" description="Helical" evidence="1">
    <location>
        <begin position="130"/>
        <end position="164"/>
    </location>
</feature>
<feature type="transmembrane region" description="Helical" evidence="1">
    <location>
        <begin position="206"/>
        <end position="226"/>
    </location>
</feature>
<feature type="transmembrane region" description="Helical" evidence="1">
    <location>
        <begin position="244"/>
        <end position="264"/>
    </location>
</feature>
<feature type="transmembrane region" description="Helical" evidence="1">
    <location>
        <begin position="307"/>
        <end position="327"/>
    </location>
</feature>
<feature type="transmembrane region" description="Helical" evidence="1">
    <location>
        <begin position="352"/>
        <end position="372"/>
    </location>
</feature>
<feature type="transmembrane region" description="Helical" evidence="1">
    <location>
        <begin position="393"/>
        <end position="413"/>
    </location>
</feature>
<feature type="transmembrane region" description="Helical" evidence="1">
    <location>
        <begin position="451"/>
        <end position="471"/>
    </location>
</feature>
<feature type="transmembrane region" description="Helical" evidence="1">
    <location>
        <begin position="478"/>
        <end position="498"/>
    </location>
</feature>
<evidence type="ECO:0000255" key="1">
    <source>
        <dbReference type="HAMAP-Rule" id="MF_01599"/>
    </source>
</evidence>